<organism>
    <name type="scientific">Microcystis aeruginosa (strain NIES-843 / IAM M-2473)</name>
    <dbReference type="NCBI Taxonomy" id="449447"/>
    <lineage>
        <taxon>Bacteria</taxon>
        <taxon>Bacillati</taxon>
        <taxon>Cyanobacteriota</taxon>
        <taxon>Cyanophyceae</taxon>
        <taxon>Oscillatoriophycideae</taxon>
        <taxon>Chroococcales</taxon>
        <taxon>Microcystaceae</taxon>
        <taxon>Microcystis</taxon>
    </lineage>
</organism>
<gene>
    <name evidence="2" type="primary">trmB</name>
    <name type="ordered locus">MAE_46310</name>
</gene>
<sequence>MAKVRVRQHVNPLSHKYRHPIAPPDWNQVYQDMTQPLHLDIGCARGKFLLQMAQVEPEINFLGIEIRQPLVIEANQERERLGLSNLAFVFGNMNVAPEILLQSLPADKLFWVSIQFPDPWFKQRHSKRRVVQPELVIALAKYMVAGGWVFLQSDVESIALEMTERFQAHPHFVRQHQTPWLEENIFPVPTEREKSTYNKGQPVYRSLFRVR</sequence>
<feature type="chain" id="PRO_1000084444" description="tRNA (guanine-N(7)-)-methyltransferase">
    <location>
        <begin position="1"/>
        <end position="211"/>
    </location>
</feature>
<feature type="active site" evidence="1">
    <location>
        <position position="118"/>
    </location>
</feature>
<feature type="binding site" evidence="2">
    <location>
        <position position="40"/>
    </location>
    <ligand>
        <name>S-adenosyl-L-methionine</name>
        <dbReference type="ChEBI" id="CHEBI:59789"/>
    </ligand>
</feature>
<feature type="binding site" evidence="2">
    <location>
        <position position="65"/>
    </location>
    <ligand>
        <name>S-adenosyl-L-methionine</name>
        <dbReference type="ChEBI" id="CHEBI:59789"/>
    </ligand>
</feature>
<feature type="binding site" evidence="2">
    <location>
        <position position="92"/>
    </location>
    <ligand>
        <name>S-adenosyl-L-methionine</name>
        <dbReference type="ChEBI" id="CHEBI:59789"/>
    </ligand>
</feature>
<feature type="binding site" evidence="2">
    <location>
        <position position="118"/>
    </location>
    <ligand>
        <name>S-adenosyl-L-methionine</name>
        <dbReference type="ChEBI" id="CHEBI:59789"/>
    </ligand>
</feature>
<feature type="binding site" evidence="2">
    <location>
        <position position="122"/>
    </location>
    <ligand>
        <name>substrate</name>
    </ligand>
</feature>
<feature type="binding site" evidence="2">
    <location>
        <position position="154"/>
    </location>
    <ligand>
        <name>substrate</name>
    </ligand>
</feature>
<keyword id="KW-0489">Methyltransferase</keyword>
<keyword id="KW-0949">S-adenosyl-L-methionine</keyword>
<keyword id="KW-0808">Transferase</keyword>
<keyword id="KW-0819">tRNA processing</keyword>
<accession>B0JUK5</accession>
<name>TRMB_MICAN</name>
<proteinExistence type="inferred from homology"/>
<protein>
    <recommendedName>
        <fullName evidence="2">tRNA (guanine-N(7)-)-methyltransferase</fullName>
        <ecNumber evidence="2">2.1.1.33</ecNumber>
    </recommendedName>
    <alternativeName>
        <fullName evidence="2">tRNA (guanine(46)-N(7))-methyltransferase</fullName>
    </alternativeName>
    <alternativeName>
        <fullName evidence="2">tRNA(m7G46)-methyltransferase</fullName>
    </alternativeName>
</protein>
<comment type="function">
    <text evidence="2">Catalyzes the formation of N(7)-methylguanine at position 46 (m7G46) in tRNA.</text>
</comment>
<comment type="catalytic activity">
    <reaction evidence="2">
        <text>guanosine(46) in tRNA + S-adenosyl-L-methionine = N(7)-methylguanosine(46) in tRNA + S-adenosyl-L-homocysteine</text>
        <dbReference type="Rhea" id="RHEA:42708"/>
        <dbReference type="Rhea" id="RHEA-COMP:10188"/>
        <dbReference type="Rhea" id="RHEA-COMP:10189"/>
        <dbReference type="ChEBI" id="CHEBI:57856"/>
        <dbReference type="ChEBI" id="CHEBI:59789"/>
        <dbReference type="ChEBI" id="CHEBI:74269"/>
        <dbReference type="ChEBI" id="CHEBI:74480"/>
        <dbReference type="EC" id="2.1.1.33"/>
    </reaction>
</comment>
<comment type="pathway">
    <text evidence="2">tRNA modification; N(7)-methylguanine-tRNA biosynthesis.</text>
</comment>
<comment type="similarity">
    <text evidence="2">Belongs to the class I-like SAM-binding methyltransferase superfamily. TrmB family.</text>
</comment>
<evidence type="ECO:0000250" key="1"/>
<evidence type="ECO:0000255" key="2">
    <source>
        <dbReference type="HAMAP-Rule" id="MF_01057"/>
    </source>
</evidence>
<reference key="1">
    <citation type="journal article" date="2007" name="DNA Res.">
        <title>Complete genomic structure of the bloom-forming toxic cyanobacterium Microcystis aeruginosa NIES-843.</title>
        <authorList>
            <person name="Kaneko T."/>
            <person name="Nakajima N."/>
            <person name="Okamoto S."/>
            <person name="Suzuki I."/>
            <person name="Tanabe Y."/>
            <person name="Tamaoki M."/>
            <person name="Nakamura Y."/>
            <person name="Kasai F."/>
            <person name="Watanabe A."/>
            <person name="Kawashima K."/>
            <person name="Kishida Y."/>
            <person name="Ono A."/>
            <person name="Shimizu Y."/>
            <person name="Takahashi C."/>
            <person name="Minami C."/>
            <person name="Fujishiro T."/>
            <person name="Kohara M."/>
            <person name="Katoh M."/>
            <person name="Nakazaki N."/>
            <person name="Nakayama S."/>
            <person name="Yamada M."/>
            <person name="Tabata S."/>
            <person name="Watanabe M.M."/>
        </authorList>
    </citation>
    <scope>NUCLEOTIDE SEQUENCE [LARGE SCALE GENOMIC DNA]</scope>
    <source>
        <strain>NIES-843 / IAM M-247</strain>
    </source>
</reference>
<dbReference type="EC" id="2.1.1.33" evidence="2"/>
<dbReference type="EMBL" id="AP009552">
    <property type="protein sequence ID" value="BAG04453.1"/>
    <property type="molecule type" value="Genomic_DNA"/>
</dbReference>
<dbReference type="RefSeq" id="WP_012267192.1">
    <property type="nucleotide sequence ID" value="NC_010296.1"/>
</dbReference>
<dbReference type="SMR" id="B0JUK5"/>
<dbReference type="STRING" id="449447.MAE_46310"/>
<dbReference type="PaxDb" id="449447-MAE_46310"/>
<dbReference type="EnsemblBacteria" id="BAG04453">
    <property type="protein sequence ID" value="BAG04453"/>
    <property type="gene ID" value="MAE_46310"/>
</dbReference>
<dbReference type="KEGG" id="mar:MAE_46310"/>
<dbReference type="PATRIC" id="fig|449447.4.peg.4209"/>
<dbReference type="eggNOG" id="COG0220">
    <property type="taxonomic scope" value="Bacteria"/>
</dbReference>
<dbReference type="HOGENOM" id="CLU_050910_1_3_3"/>
<dbReference type="BioCyc" id="MAER449447:MAE_RS20090-MONOMER"/>
<dbReference type="UniPathway" id="UPA00989"/>
<dbReference type="Proteomes" id="UP000001510">
    <property type="component" value="Chromosome"/>
</dbReference>
<dbReference type="GO" id="GO:0043527">
    <property type="term" value="C:tRNA methyltransferase complex"/>
    <property type="evidence" value="ECO:0007669"/>
    <property type="project" value="TreeGrafter"/>
</dbReference>
<dbReference type="GO" id="GO:0008176">
    <property type="term" value="F:tRNA (guanine(46)-N7)-methyltransferase activity"/>
    <property type="evidence" value="ECO:0007669"/>
    <property type="project" value="UniProtKB-UniRule"/>
</dbReference>
<dbReference type="CDD" id="cd02440">
    <property type="entry name" value="AdoMet_MTases"/>
    <property type="match status" value="1"/>
</dbReference>
<dbReference type="Gene3D" id="3.40.50.150">
    <property type="entry name" value="Vaccinia Virus protein VP39"/>
    <property type="match status" value="1"/>
</dbReference>
<dbReference type="HAMAP" id="MF_01057">
    <property type="entry name" value="tRNA_methyltr_TrmB"/>
    <property type="match status" value="1"/>
</dbReference>
<dbReference type="InterPro" id="IPR029063">
    <property type="entry name" value="SAM-dependent_MTases_sf"/>
</dbReference>
<dbReference type="InterPro" id="IPR003358">
    <property type="entry name" value="tRNA_(Gua-N-7)_MeTrfase_Trmb"/>
</dbReference>
<dbReference type="InterPro" id="IPR055361">
    <property type="entry name" value="tRNA_methyltr_TrmB_bact"/>
</dbReference>
<dbReference type="NCBIfam" id="TIGR00091">
    <property type="entry name" value="tRNA (guanosine(46)-N7)-methyltransferase TrmB"/>
    <property type="match status" value="1"/>
</dbReference>
<dbReference type="PANTHER" id="PTHR23417">
    <property type="entry name" value="3-DEOXY-D-MANNO-OCTULOSONIC-ACID TRANSFERASE/TRNA GUANINE-N 7 - -METHYLTRANSFERASE"/>
    <property type="match status" value="1"/>
</dbReference>
<dbReference type="PANTHER" id="PTHR23417:SF21">
    <property type="entry name" value="TRNA (GUANINE-N(7)-)-METHYLTRANSFERASE"/>
    <property type="match status" value="1"/>
</dbReference>
<dbReference type="Pfam" id="PF02390">
    <property type="entry name" value="Methyltransf_4"/>
    <property type="match status" value="1"/>
</dbReference>
<dbReference type="SUPFAM" id="SSF53335">
    <property type="entry name" value="S-adenosyl-L-methionine-dependent methyltransferases"/>
    <property type="match status" value="1"/>
</dbReference>
<dbReference type="PROSITE" id="PS51625">
    <property type="entry name" value="SAM_MT_TRMB"/>
    <property type="match status" value="1"/>
</dbReference>